<keyword id="KW-0963">Cytoplasm</keyword>
<keyword id="KW-0489">Methyltransferase</keyword>
<keyword id="KW-1185">Reference proteome</keyword>
<keyword id="KW-0694">RNA-binding</keyword>
<keyword id="KW-0698">rRNA processing</keyword>
<keyword id="KW-0949">S-adenosyl-L-methionine</keyword>
<keyword id="KW-0808">Transferase</keyword>
<feature type="chain" id="PRO_1000056666" description="Ribosomal RNA small subunit methyltransferase A">
    <location>
        <begin position="1"/>
        <end position="268"/>
    </location>
</feature>
<feature type="binding site" evidence="1">
    <location>
        <position position="18"/>
    </location>
    <ligand>
        <name>S-adenosyl-L-methionine</name>
        <dbReference type="ChEBI" id="CHEBI:59789"/>
    </ligand>
</feature>
<feature type="binding site" evidence="1">
    <location>
        <position position="20"/>
    </location>
    <ligand>
        <name>S-adenosyl-L-methionine</name>
        <dbReference type="ChEBI" id="CHEBI:59789"/>
    </ligand>
</feature>
<feature type="binding site" evidence="1">
    <location>
        <position position="45"/>
    </location>
    <ligand>
        <name>S-adenosyl-L-methionine</name>
        <dbReference type="ChEBI" id="CHEBI:59789"/>
    </ligand>
</feature>
<feature type="binding site" evidence="1">
    <location>
        <position position="66"/>
    </location>
    <ligand>
        <name>S-adenosyl-L-methionine</name>
        <dbReference type="ChEBI" id="CHEBI:59789"/>
    </ligand>
</feature>
<feature type="binding site" evidence="1">
    <location>
        <position position="91"/>
    </location>
    <ligand>
        <name>S-adenosyl-L-methionine</name>
        <dbReference type="ChEBI" id="CHEBI:59789"/>
    </ligand>
</feature>
<feature type="binding site" evidence="1">
    <location>
        <position position="112"/>
    </location>
    <ligand>
        <name>S-adenosyl-L-methionine</name>
        <dbReference type="ChEBI" id="CHEBI:59789"/>
    </ligand>
</feature>
<proteinExistence type="inferred from homology"/>
<accession>A3D188</accession>
<reference key="1">
    <citation type="submission" date="2007-02" db="EMBL/GenBank/DDBJ databases">
        <title>Complete sequence of chromosome of Shewanella baltica OS155.</title>
        <authorList>
            <consortium name="US DOE Joint Genome Institute"/>
            <person name="Copeland A."/>
            <person name="Lucas S."/>
            <person name="Lapidus A."/>
            <person name="Barry K."/>
            <person name="Detter J.C."/>
            <person name="Glavina del Rio T."/>
            <person name="Hammon N."/>
            <person name="Israni S."/>
            <person name="Dalin E."/>
            <person name="Tice H."/>
            <person name="Pitluck S."/>
            <person name="Sims D.R."/>
            <person name="Brettin T."/>
            <person name="Bruce D."/>
            <person name="Han C."/>
            <person name="Tapia R."/>
            <person name="Brainard J."/>
            <person name="Schmutz J."/>
            <person name="Larimer F."/>
            <person name="Land M."/>
            <person name="Hauser L."/>
            <person name="Kyrpides N."/>
            <person name="Mikhailova N."/>
            <person name="Brettar I."/>
            <person name="Klappenbach J."/>
            <person name="Konstantinidis K."/>
            <person name="Rodrigues J."/>
            <person name="Tiedje J."/>
            <person name="Richardson P."/>
        </authorList>
    </citation>
    <scope>NUCLEOTIDE SEQUENCE [LARGE SCALE GENOMIC DNA]</scope>
    <source>
        <strain>OS155 / ATCC BAA-1091</strain>
    </source>
</reference>
<protein>
    <recommendedName>
        <fullName evidence="1">Ribosomal RNA small subunit methyltransferase A</fullName>
        <ecNumber evidence="1">2.1.1.182</ecNumber>
    </recommendedName>
    <alternativeName>
        <fullName evidence="1">16S rRNA (adenine(1518)-N(6)/adenine(1519)-N(6))-dimethyltransferase</fullName>
    </alternativeName>
    <alternativeName>
        <fullName evidence="1">16S rRNA dimethyladenosine transferase</fullName>
    </alternativeName>
    <alternativeName>
        <fullName evidence="1">16S rRNA dimethylase</fullName>
    </alternativeName>
    <alternativeName>
        <fullName evidence="1">S-adenosylmethionine-6-N', N'-adenosyl(rRNA) dimethyltransferase</fullName>
    </alternativeName>
</protein>
<evidence type="ECO:0000255" key="1">
    <source>
        <dbReference type="HAMAP-Rule" id="MF_00607"/>
    </source>
</evidence>
<gene>
    <name evidence="1" type="primary">rsmA</name>
    <name evidence="1" type="synonym">ksgA</name>
    <name type="ordered locus">Sbal_0977</name>
</gene>
<sequence length="268" mass="30122">MSNKVHLGHTARKRFGQNFLTDGNVIDRIVGAISPDNHHVMVEIGPGLGALTEPVAEAVDNLTVVELDRDLVERLHHHPVLKDKLTIHQGDALQFDFGQLSVPGKKMKVFGNLPYNISTPLMFHLFEFAEQIETMHFMLQKEVVLRLSASPGCKAYGRLTVMAQYFCQVVPVLEVPPHSFTPAPKVDSAVVRLLPYAVKPFPCKDVTVLRHLCTTAFNMRRKTLRNNLKHMLSDDEFEQLGIDSSQRPEQISVQQYVAMANMVCDKKA</sequence>
<name>RSMA_SHEB5</name>
<comment type="function">
    <text evidence="1">Specifically dimethylates two adjacent adenosines (A1518 and A1519) in the loop of a conserved hairpin near the 3'-end of 16S rRNA in the 30S particle. May play a critical role in biogenesis of 30S subunits.</text>
</comment>
<comment type="catalytic activity">
    <reaction evidence="1">
        <text>adenosine(1518)/adenosine(1519) in 16S rRNA + 4 S-adenosyl-L-methionine = N(6)-dimethyladenosine(1518)/N(6)-dimethyladenosine(1519) in 16S rRNA + 4 S-adenosyl-L-homocysteine + 4 H(+)</text>
        <dbReference type="Rhea" id="RHEA:19609"/>
        <dbReference type="Rhea" id="RHEA-COMP:10232"/>
        <dbReference type="Rhea" id="RHEA-COMP:10233"/>
        <dbReference type="ChEBI" id="CHEBI:15378"/>
        <dbReference type="ChEBI" id="CHEBI:57856"/>
        <dbReference type="ChEBI" id="CHEBI:59789"/>
        <dbReference type="ChEBI" id="CHEBI:74411"/>
        <dbReference type="ChEBI" id="CHEBI:74493"/>
        <dbReference type="EC" id="2.1.1.182"/>
    </reaction>
</comment>
<comment type="subcellular location">
    <subcellularLocation>
        <location evidence="1">Cytoplasm</location>
    </subcellularLocation>
</comment>
<comment type="similarity">
    <text evidence="1">Belongs to the class I-like SAM-binding methyltransferase superfamily. rRNA adenine N(6)-methyltransferase family. RsmA subfamily.</text>
</comment>
<dbReference type="EC" id="2.1.1.182" evidence="1"/>
<dbReference type="EMBL" id="CP000563">
    <property type="protein sequence ID" value="ABN60501.1"/>
    <property type="molecule type" value="Genomic_DNA"/>
</dbReference>
<dbReference type="RefSeq" id="WP_011846027.1">
    <property type="nucleotide sequence ID" value="NC_009052.1"/>
</dbReference>
<dbReference type="SMR" id="A3D188"/>
<dbReference type="STRING" id="325240.Sbal_0977"/>
<dbReference type="KEGG" id="sbl:Sbal_0977"/>
<dbReference type="HOGENOM" id="CLU_041220_0_1_6"/>
<dbReference type="OrthoDB" id="9814755at2"/>
<dbReference type="Proteomes" id="UP000001557">
    <property type="component" value="Chromosome"/>
</dbReference>
<dbReference type="GO" id="GO:0005829">
    <property type="term" value="C:cytosol"/>
    <property type="evidence" value="ECO:0007669"/>
    <property type="project" value="TreeGrafter"/>
</dbReference>
<dbReference type="GO" id="GO:0052908">
    <property type="term" value="F:16S rRNA (adenine(1518)-N(6)/adenine(1519)-N(6))-dimethyltransferase activity"/>
    <property type="evidence" value="ECO:0007669"/>
    <property type="project" value="UniProtKB-EC"/>
</dbReference>
<dbReference type="GO" id="GO:0003723">
    <property type="term" value="F:RNA binding"/>
    <property type="evidence" value="ECO:0007669"/>
    <property type="project" value="UniProtKB-KW"/>
</dbReference>
<dbReference type="CDD" id="cd02440">
    <property type="entry name" value="AdoMet_MTases"/>
    <property type="match status" value="1"/>
</dbReference>
<dbReference type="FunFam" id="1.10.8.100:FF:000001">
    <property type="entry name" value="Ribosomal RNA small subunit methyltransferase A"/>
    <property type="match status" value="1"/>
</dbReference>
<dbReference type="FunFam" id="3.40.50.150:FF:000006">
    <property type="entry name" value="Ribosomal RNA small subunit methyltransferase A"/>
    <property type="match status" value="1"/>
</dbReference>
<dbReference type="Gene3D" id="1.10.8.100">
    <property type="entry name" value="Ribosomal RNA adenine dimethylase-like, domain 2"/>
    <property type="match status" value="1"/>
</dbReference>
<dbReference type="Gene3D" id="3.40.50.150">
    <property type="entry name" value="Vaccinia Virus protein VP39"/>
    <property type="match status" value="1"/>
</dbReference>
<dbReference type="HAMAP" id="MF_00607">
    <property type="entry name" value="16SrRNA_methyltr_A"/>
    <property type="match status" value="1"/>
</dbReference>
<dbReference type="InterPro" id="IPR001737">
    <property type="entry name" value="KsgA/Erm"/>
</dbReference>
<dbReference type="InterPro" id="IPR023165">
    <property type="entry name" value="rRNA_Ade_diMease-like_C"/>
</dbReference>
<dbReference type="InterPro" id="IPR020596">
    <property type="entry name" value="rRNA_Ade_Mease_Trfase_CS"/>
</dbReference>
<dbReference type="InterPro" id="IPR020598">
    <property type="entry name" value="rRNA_Ade_methylase_Trfase_N"/>
</dbReference>
<dbReference type="InterPro" id="IPR011530">
    <property type="entry name" value="rRNA_adenine_dimethylase"/>
</dbReference>
<dbReference type="InterPro" id="IPR029063">
    <property type="entry name" value="SAM-dependent_MTases_sf"/>
</dbReference>
<dbReference type="NCBIfam" id="TIGR00755">
    <property type="entry name" value="ksgA"/>
    <property type="match status" value="1"/>
</dbReference>
<dbReference type="PANTHER" id="PTHR11727">
    <property type="entry name" value="DIMETHYLADENOSINE TRANSFERASE"/>
    <property type="match status" value="1"/>
</dbReference>
<dbReference type="PANTHER" id="PTHR11727:SF7">
    <property type="entry name" value="DIMETHYLADENOSINE TRANSFERASE-RELATED"/>
    <property type="match status" value="1"/>
</dbReference>
<dbReference type="Pfam" id="PF00398">
    <property type="entry name" value="RrnaAD"/>
    <property type="match status" value="1"/>
</dbReference>
<dbReference type="SMART" id="SM00650">
    <property type="entry name" value="rADc"/>
    <property type="match status" value="1"/>
</dbReference>
<dbReference type="SUPFAM" id="SSF53335">
    <property type="entry name" value="S-adenosyl-L-methionine-dependent methyltransferases"/>
    <property type="match status" value="1"/>
</dbReference>
<dbReference type="PROSITE" id="PS01131">
    <property type="entry name" value="RRNA_A_DIMETH"/>
    <property type="match status" value="1"/>
</dbReference>
<dbReference type="PROSITE" id="PS51689">
    <property type="entry name" value="SAM_RNA_A_N6_MT"/>
    <property type="match status" value="1"/>
</dbReference>
<organism>
    <name type="scientific">Shewanella baltica (strain OS155 / ATCC BAA-1091)</name>
    <dbReference type="NCBI Taxonomy" id="325240"/>
    <lineage>
        <taxon>Bacteria</taxon>
        <taxon>Pseudomonadati</taxon>
        <taxon>Pseudomonadota</taxon>
        <taxon>Gammaproteobacteria</taxon>
        <taxon>Alteromonadales</taxon>
        <taxon>Shewanellaceae</taxon>
        <taxon>Shewanella</taxon>
    </lineage>
</organism>